<reference key="1">
    <citation type="journal article" date="2008" name="Environ. Microbiol.">
        <title>The complete genome sequence of Moorella thermoacetica (f. Clostridium thermoaceticum).</title>
        <authorList>
            <person name="Pierce E."/>
            <person name="Xie G."/>
            <person name="Barabote R.D."/>
            <person name="Saunders E."/>
            <person name="Han C.S."/>
            <person name="Detter J.C."/>
            <person name="Richardson P."/>
            <person name="Brettin T.S."/>
            <person name="Das A."/>
            <person name="Ljungdahl L.G."/>
            <person name="Ragsdale S.W."/>
        </authorList>
    </citation>
    <scope>NUCLEOTIDE SEQUENCE [LARGE SCALE GENOMIC DNA]</scope>
    <source>
        <strain>ATCC 39073 / JCM 9320</strain>
    </source>
</reference>
<evidence type="ECO:0000255" key="1">
    <source>
        <dbReference type="HAMAP-Rule" id="MF_01325"/>
    </source>
</evidence>
<evidence type="ECO:0000305" key="2"/>
<keyword id="KW-0687">Ribonucleoprotein</keyword>
<keyword id="KW-0689">Ribosomal protein</keyword>
<keyword id="KW-0694">RNA-binding</keyword>
<keyword id="KW-0699">rRNA-binding</keyword>
<comment type="function">
    <text evidence="1">One of the primary rRNA binding proteins, it binds directly near the 3'-end of the 23S rRNA, where it nucleates assembly of the 50S subunit.</text>
</comment>
<comment type="subunit">
    <text evidence="1">Part of the 50S ribosomal subunit. Forms a cluster with proteins L14 and L19.</text>
</comment>
<comment type="similarity">
    <text evidence="1">Belongs to the universal ribosomal protein uL3 family.</text>
</comment>
<organism>
    <name type="scientific">Moorella thermoacetica (strain ATCC 39073 / JCM 9320)</name>
    <dbReference type="NCBI Taxonomy" id="264732"/>
    <lineage>
        <taxon>Bacteria</taxon>
        <taxon>Bacillati</taxon>
        <taxon>Bacillota</taxon>
        <taxon>Clostridia</taxon>
        <taxon>Moorellales</taxon>
        <taxon>Moorellaceae</taxon>
        <taxon>Moorella</taxon>
    </lineage>
</organism>
<accession>Q2RFP7</accession>
<gene>
    <name evidence="1" type="primary">rplC</name>
    <name type="ordered locus">Moth_2460</name>
</gene>
<dbReference type="EMBL" id="CP000232">
    <property type="protein sequence ID" value="ABC20742.1"/>
    <property type="molecule type" value="Genomic_DNA"/>
</dbReference>
<dbReference type="RefSeq" id="YP_431285.1">
    <property type="nucleotide sequence ID" value="NC_007644.1"/>
</dbReference>
<dbReference type="SMR" id="Q2RFP7"/>
<dbReference type="STRING" id="264732.Moth_2460"/>
<dbReference type="EnsemblBacteria" id="ABC20742">
    <property type="protein sequence ID" value="ABC20742"/>
    <property type="gene ID" value="Moth_2460"/>
</dbReference>
<dbReference type="KEGG" id="mta:Moth_2460"/>
<dbReference type="PATRIC" id="fig|264732.11.peg.2678"/>
<dbReference type="eggNOG" id="COG0087">
    <property type="taxonomic scope" value="Bacteria"/>
</dbReference>
<dbReference type="HOGENOM" id="CLU_044142_4_1_9"/>
<dbReference type="OrthoDB" id="9806135at2"/>
<dbReference type="GO" id="GO:0022625">
    <property type="term" value="C:cytosolic large ribosomal subunit"/>
    <property type="evidence" value="ECO:0007669"/>
    <property type="project" value="TreeGrafter"/>
</dbReference>
<dbReference type="GO" id="GO:0019843">
    <property type="term" value="F:rRNA binding"/>
    <property type="evidence" value="ECO:0007669"/>
    <property type="project" value="UniProtKB-UniRule"/>
</dbReference>
<dbReference type="GO" id="GO:0003735">
    <property type="term" value="F:structural constituent of ribosome"/>
    <property type="evidence" value="ECO:0007669"/>
    <property type="project" value="InterPro"/>
</dbReference>
<dbReference type="GO" id="GO:0006412">
    <property type="term" value="P:translation"/>
    <property type="evidence" value="ECO:0007669"/>
    <property type="project" value="UniProtKB-UniRule"/>
</dbReference>
<dbReference type="FunFam" id="2.40.30.10:FF:000004">
    <property type="entry name" value="50S ribosomal protein L3"/>
    <property type="match status" value="1"/>
</dbReference>
<dbReference type="FunFam" id="3.30.160.810:FF:000001">
    <property type="entry name" value="50S ribosomal protein L3"/>
    <property type="match status" value="1"/>
</dbReference>
<dbReference type="Gene3D" id="3.30.160.810">
    <property type="match status" value="1"/>
</dbReference>
<dbReference type="Gene3D" id="2.40.30.10">
    <property type="entry name" value="Translation factors"/>
    <property type="match status" value="1"/>
</dbReference>
<dbReference type="HAMAP" id="MF_01325_B">
    <property type="entry name" value="Ribosomal_uL3_B"/>
    <property type="match status" value="1"/>
</dbReference>
<dbReference type="InterPro" id="IPR000597">
    <property type="entry name" value="Ribosomal_uL3"/>
</dbReference>
<dbReference type="InterPro" id="IPR019927">
    <property type="entry name" value="Ribosomal_uL3_bac/org-type"/>
</dbReference>
<dbReference type="InterPro" id="IPR019926">
    <property type="entry name" value="Ribosomal_uL3_CS"/>
</dbReference>
<dbReference type="InterPro" id="IPR009000">
    <property type="entry name" value="Transl_B-barrel_sf"/>
</dbReference>
<dbReference type="NCBIfam" id="TIGR03625">
    <property type="entry name" value="L3_bact"/>
    <property type="match status" value="1"/>
</dbReference>
<dbReference type="PANTHER" id="PTHR11229">
    <property type="entry name" value="50S RIBOSOMAL PROTEIN L3"/>
    <property type="match status" value="1"/>
</dbReference>
<dbReference type="PANTHER" id="PTHR11229:SF16">
    <property type="entry name" value="LARGE RIBOSOMAL SUBUNIT PROTEIN UL3C"/>
    <property type="match status" value="1"/>
</dbReference>
<dbReference type="Pfam" id="PF00297">
    <property type="entry name" value="Ribosomal_L3"/>
    <property type="match status" value="1"/>
</dbReference>
<dbReference type="SUPFAM" id="SSF50447">
    <property type="entry name" value="Translation proteins"/>
    <property type="match status" value="1"/>
</dbReference>
<dbReference type="PROSITE" id="PS00474">
    <property type="entry name" value="RIBOSOMAL_L3"/>
    <property type="match status" value="1"/>
</dbReference>
<name>RL3_MOOTA</name>
<sequence>MRKGILGKKIGMTQVFDETGRAIPVTVIQAGPCVVIRKKETSTDGYDAVQVGFEPVKERKVNKPLLGYFNKAGVTPFRYIREFRLENSGEYQVGQEIKADVFSPGEKVDVTGISKGKGFAGGIKRHGFHRGPMEHGSKYHRRPGSLAAKGPARVFKGRRLPGHLGAVRVTVQGLEVVRNDPERNLLLIKGSVPGPRHGLLVIKNSVKGG</sequence>
<proteinExistence type="inferred from homology"/>
<feature type="chain" id="PRO_0000241366" description="Large ribosomal subunit protein uL3">
    <location>
        <begin position="1"/>
        <end position="209"/>
    </location>
</feature>
<protein>
    <recommendedName>
        <fullName evidence="1">Large ribosomal subunit protein uL3</fullName>
    </recommendedName>
    <alternativeName>
        <fullName evidence="2">50S ribosomal protein L3</fullName>
    </alternativeName>
</protein>